<evidence type="ECO:0000250" key="1">
    <source>
        <dbReference type="UniProtKB" id="P04003"/>
    </source>
</evidence>
<evidence type="ECO:0000250" key="2">
    <source>
        <dbReference type="UniProtKB" id="P08174"/>
    </source>
</evidence>
<evidence type="ECO:0000250" key="3">
    <source>
        <dbReference type="UniProtKB" id="Q60736"/>
    </source>
</evidence>
<evidence type="ECO:0000255" key="4">
    <source>
        <dbReference type="PROSITE-ProRule" id="PRU00302"/>
    </source>
</evidence>
<evidence type="ECO:0000269" key="5">
    <source>
    </source>
</evidence>
<evidence type="ECO:0000303" key="6">
    <source>
    </source>
</evidence>
<evidence type="ECO:0000305" key="7"/>
<evidence type="ECO:0000312" key="8">
    <source>
        <dbReference type="EMBL" id="AAP37007.1"/>
    </source>
</evidence>
<accession>Q7TSY4</accession>
<accession>Q7TSY3</accession>
<feature type="signal peptide" evidence="3">
    <location>
        <begin position="1"/>
        <end position="32"/>
    </location>
</feature>
<feature type="chain" id="PRO_0000006014" description="Zona pellucida sperm-binding protein 3 receptor" evidence="3">
    <location>
        <begin position="33"/>
        <end position="577"/>
    </location>
</feature>
<feature type="domain" description="Sushi 1" evidence="4 7">
    <location>
        <begin position="33"/>
        <end position="92"/>
    </location>
</feature>
<feature type="domain" description="Sushi 2" evidence="4 7">
    <location>
        <begin position="93"/>
        <end position="154"/>
    </location>
</feature>
<feature type="domain" description="Sushi 3" evidence="4 7">
    <location>
        <begin position="155"/>
        <end position="219"/>
    </location>
</feature>
<feature type="domain" description="Sushi 4" evidence="4 7">
    <location>
        <begin position="220"/>
        <end position="279"/>
    </location>
</feature>
<feature type="domain" description="Sushi 5" evidence="4 7">
    <location>
        <begin position="280"/>
        <end position="346"/>
    </location>
</feature>
<feature type="domain" description="Sushi 6" evidence="4 7">
    <location>
        <begin position="347"/>
        <end position="412"/>
    </location>
</feature>
<feature type="domain" description="Sushi 7" evidence="4 7">
    <location>
        <begin position="451"/>
        <end position="509"/>
    </location>
</feature>
<feature type="glycosylation site" description="N-linked (GlcNAc...) asparagine" evidence="7">
    <location>
        <position position="72"/>
    </location>
</feature>
<feature type="glycosylation site" description="N-linked (GlcNAc...) asparagine" evidence="7">
    <location>
        <position position="81"/>
    </location>
</feature>
<feature type="glycosylation site" description="N-linked (GlcNAc...) asparagine" evidence="7">
    <location>
        <position position="144"/>
    </location>
</feature>
<feature type="glycosylation site" description="N-linked (GlcNAc...) asparagine" evidence="7">
    <location>
        <position position="195"/>
    </location>
</feature>
<feature type="glycosylation site" description="N-linked (GlcNAc...) asparagine" evidence="7">
    <location>
        <position position="204"/>
    </location>
</feature>
<feature type="glycosylation site" description="N-linked (GlcNAc...) asparagine" evidence="7">
    <location>
        <position position="335"/>
    </location>
</feature>
<feature type="glycosylation site" description="N-linked (GlcNAc...) asparagine" evidence="7">
    <location>
        <position position="426"/>
    </location>
</feature>
<feature type="glycosylation site" description="N-linked (GlcNAc...) asparagine" evidence="7">
    <location>
        <position position="431"/>
    </location>
</feature>
<feature type="glycosylation site" description="N-linked (GlcNAc...) asparagine" evidence="7">
    <location>
        <position position="434"/>
    </location>
</feature>
<feature type="glycosylation site" description="N-linked (GlcNAc...) asparagine" evidence="7">
    <location>
        <position position="443"/>
    </location>
</feature>
<feature type="glycosylation site" description="N-linked (GlcNAc...) asparagine" evidence="7">
    <location>
        <position position="462"/>
    </location>
</feature>
<feature type="glycosylation site" description="N-linked (GlcNAc...) asparagine" evidence="7">
    <location>
        <position position="475"/>
    </location>
</feature>
<feature type="glycosylation site" description="N-linked (GlcNAc...) asparagine" evidence="7">
    <location>
        <position position="497"/>
    </location>
</feature>
<feature type="disulfide bond" evidence="2 4">
    <location>
        <begin position="34"/>
        <end position="78"/>
    </location>
</feature>
<feature type="disulfide bond" evidence="1 4">
    <location>
        <begin position="64"/>
        <end position="90"/>
    </location>
</feature>
<feature type="disulfide bond" evidence="1 4">
    <location>
        <begin position="95"/>
        <end position="136"/>
    </location>
</feature>
<feature type="disulfide bond" evidence="2 4">
    <location>
        <begin position="122"/>
        <end position="152"/>
    </location>
</feature>
<feature type="disulfide bond" evidence="2 4">
    <location>
        <begin position="157"/>
        <end position="200"/>
    </location>
</feature>
<feature type="disulfide bond" evidence="2 4">
    <location>
        <begin position="186"/>
        <end position="217"/>
    </location>
</feature>
<feature type="disulfide bond" evidence="2 4">
    <location>
        <begin position="222"/>
        <end position="264"/>
    </location>
</feature>
<feature type="disulfide bond" evidence="2 4">
    <location>
        <begin position="250"/>
        <end position="277"/>
    </location>
</feature>
<feature type="disulfide bond" evidence="1 4">
    <location>
        <begin position="282"/>
        <end position="332"/>
    </location>
</feature>
<feature type="disulfide bond" evidence="1 4">
    <location>
        <begin position="316"/>
        <end position="344"/>
    </location>
</feature>
<feature type="disulfide bond" evidence="1 4">
    <location>
        <begin position="349"/>
        <end position="397"/>
    </location>
</feature>
<feature type="disulfide bond" evidence="1 4">
    <location>
        <begin position="382"/>
        <end position="410"/>
    </location>
</feature>
<feature type="disulfide bond" evidence="1 4">
    <location>
        <begin position="453"/>
        <end position="494"/>
    </location>
</feature>
<feature type="disulfide bond" evidence="1 4">
    <location>
        <begin position="480"/>
        <end position="507"/>
    </location>
</feature>
<feature type="splice variant" id="VSP_050758" description="In isoform 2." evidence="6">
    <location>
        <begin position="154"/>
        <end position="218"/>
    </location>
</feature>
<keyword id="KW-0025">Alternative splicing</keyword>
<keyword id="KW-0968">Cytoplasmic vesicle</keyword>
<keyword id="KW-1015">Disulfide bond</keyword>
<keyword id="KW-0278">Fertilization</keyword>
<keyword id="KW-0325">Glycoprotein</keyword>
<keyword id="KW-1185">Reference proteome</keyword>
<keyword id="KW-0677">Repeat</keyword>
<keyword id="KW-0732">Signal</keyword>
<keyword id="KW-0768">Sushi</keyword>
<protein>
    <recommendedName>
        <fullName>Zona pellucida sperm-binding protein 3 receptor</fullName>
    </recommendedName>
    <alternativeName>
        <fullName>Sperm fertilization protein 56</fullName>
        <shortName>sp56</shortName>
    </alternativeName>
</protein>
<gene>
    <name type="primary">Zp3r</name>
    <name type="synonym">Sp56</name>
</gene>
<proteinExistence type="evidence at transcript level"/>
<sequence length="577" mass="64373">MTAWSLHELWKTSHSTLFQVTLATVLMAPVLGDCGPPPSLPFASPISQLDEVSFPPGAVLKYTCHHGFKRTNSSHITCDENGSWVYTTFCARKRCKNPGELVNGKIEILSDLLVGLNIEFSCSEGYLLIGSATSRCEVQGKGVNWSDSLPECVIATCEPPPVINNGKHSGREEDLYTYGSMVIYSCDPSYTLFGNASIVCTVVNKTVGVWSPHPPACEKIVCHQPQIPKGELVPGFRHFHTYKDALEIRCKKGFALRGNSVIHCEANGEWFPSVPTCEPNGCIDIPDISYASWDGNRFPLENTAVFEIGTKLKYRCKPGYRANVHDVQIVTCQENLTWSSPSGCERVCCPTPNMEKIKIVSERRDFTGTCVYAYGDYVFYICSEGTYPMTTDGRSSCQADGKWDPAIPSCEADPSLQNHFALTFPNISETNVTNRTYLLENENATESFIKAVCPKPEIINGNLSVEKEIYAEMENITIQCDSGYDLVGSSNIICLENRTWYPDIPFCIMEGPEDCEIVNKGRQLLQCLSSPEDVQRALEVYKLSLEIERLEQQREKRTSVHRKAHYTKVDGPFRPFS</sequence>
<comment type="function">
    <text evidence="3">Binds to ZP3 glycoprotein in egg zona pellucida. Probably involved in interactions between sperm acrosome and egg zona pellucida during and immediately following the acrosome reaction (By similarity).</text>
</comment>
<comment type="subunit">
    <text evidence="3">Homomultimer; disulfide-linked.</text>
</comment>
<comment type="subcellular location">
    <subcellularLocation>
        <location evidence="5">Cytoplasmic vesicle</location>
        <location evidence="5">Secretory vesicle</location>
        <location evidence="5">Acrosome lumen</location>
    </subcellularLocation>
    <text>Sperm acrosomal matrix.</text>
</comment>
<comment type="alternative products">
    <event type="alternative splicing"/>
    <isoform>
        <id>Q7TSY4-1</id>
        <name evidence="5">1</name>
        <name evidence="6">L</name>
        <sequence type="displayed"/>
    </isoform>
    <isoform>
        <id>Q7TSY4-2</id>
        <name evidence="5">2</name>
        <name evidence="6">S</name>
        <sequence type="described" ref="VSP_050758"/>
    </isoform>
</comment>
<comment type="tissue specificity">
    <text evidence="5">Testis specific.</text>
</comment>
<comment type="developmental stage">
    <text evidence="5">Detected from early pachytene spermatocytes and throughout spermatogenesis.</text>
</comment>
<comment type="PTM">
    <text evidence="3">Glycosylated.</text>
</comment>
<reference evidence="7" key="1">
    <citation type="journal article" date="2003" name="Cell Res.">
        <title>Cloning of rat sp56, the homologue of mouse sperm ZP3 receptor-sp56.</title>
        <authorList>
            <person name="He X.B."/>
            <person name="Yan Y.C."/>
            <person name="Li Y.P."/>
            <person name="Koide S.S."/>
        </authorList>
    </citation>
    <scope>NUCLEOTIDE SEQUENCE [MRNA] (ISOFORMS 1 AND 2)</scope>
    <scope>SUBCELLULAR LOCATION</scope>
    <scope>TISSUE SPECIFICITY</scope>
    <scope>DEVELOPMENTAL STAGE</scope>
    <source>
        <strain evidence="8">Wistar</strain>
        <tissue evidence="8">Testis</tissue>
    </source>
</reference>
<organism evidence="8">
    <name type="scientific">Rattus norvegicus</name>
    <name type="common">Rat</name>
    <dbReference type="NCBI Taxonomy" id="10116"/>
    <lineage>
        <taxon>Eukaryota</taxon>
        <taxon>Metazoa</taxon>
        <taxon>Chordata</taxon>
        <taxon>Craniata</taxon>
        <taxon>Vertebrata</taxon>
        <taxon>Euteleostomi</taxon>
        <taxon>Mammalia</taxon>
        <taxon>Eutheria</taxon>
        <taxon>Euarchontoglires</taxon>
        <taxon>Glires</taxon>
        <taxon>Rodentia</taxon>
        <taxon>Myomorpha</taxon>
        <taxon>Muroidea</taxon>
        <taxon>Muridae</taxon>
        <taxon>Murinae</taxon>
        <taxon>Rattus</taxon>
    </lineage>
</organism>
<dbReference type="EMBL" id="AY278363">
    <property type="protein sequence ID" value="AAP37007.1"/>
    <property type="molecule type" value="mRNA"/>
</dbReference>
<dbReference type="EMBL" id="AY278364">
    <property type="protein sequence ID" value="AAP37008.1"/>
    <property type="molecule type" value="mRNA"/>
</dbReference>
<dbReference type="SMR" id="Q7TSY4"/>
<dbReference type="FunCoup" id="Q7TSY4">
    <property type="interactions" value="1"/>
</dbReference>
<dbReference type="STRING" id="10116.ENSRNOP00000031964"/>
<dbReference type="GlyCosmos" id="Q7TSY4">
    <property type="glycosylation" value="13 sites, No reported glycans"/>
</dbReference>
<dbReference type="GlyGen" id="Q7TSY4">
    <property type="glycosylation" value="13 sites"/>
</dbReference>
<dbReference type="PhosphoSitePlus" id="Q7TSY4"/>
<dbReference type="PaxDb" id="10116-ENSRNOP00000031964"/>
<dbReference type="UCSC" id="RGD:727846">
    <molecule id="Q7TSY4-1"/>
    <property type="organism name" value="rat"/>
</dbReference>
<dbReference type="AGR" id="RGD:727846"/>
<dbReference type="RGD" id="727846">
    <property type="gene designation" value="Zp3r"/>
</dbReference>
<dbReference type="eggNOG" id="ENOG502SHRK">
    <property type="taxonomic scope" value="Eukaryota"/>
</dbReference>
<dbReference type="InParanoid" id="Q7TSY4"/>
<dbReference type="OrthoDB" id="8961654at2759"/>
<dbReference type="PhylomeDB" id="Q7TSY4"/>
<dbReference type="PRO" id="PR:Q7TSY4"/>
<dbReference type="Proteomes" id="UP000002494">
    <property type="component" value="Unplaced"/>
</dbReference>
<dbReference type="GO" id="GO:0043160">
    <property type="term" value="C:acrosomal lumen"/>
    <property type="evidence" value="ECO:0007669"/>
    <property type="project" value="UniProtKB-SubCell"/>
</dbReference>
<dbReference type="GO" id="GO:0043159">
    <property type="term" value="C:acrosomal matrix"/>
    <property type="evidence" value="ECO:0000314"/>
    <property type="project" value="UniProtKB"/>
</dbReference>
<dbReference type="GO" id="GO:0005615">
    <property type="term" value="C:extracellular space"/>
    <property type="evidence" value="ECO:0000318"/>
    <property type="project" value="GO_Central"/>
</dbReference>
<dbReference type="GO" id="GO:0005886">
    <property type="term" value="C:plasma membrane"/>
    <property type="evidence" value="ECO:0000318"/>
    <property type="project" value="GO_Central"/>
</dbReference>
<dbReference type="GO" id="GO:0007339">
    <property type="term" value="P:binding of sperm to zona pellucida"/>
    <property type="evidence" value="ECO:0000315"/>
    <property type="project" value="RGD"/>
</dbReference>
<dbReference type="GO" id="GO:0045959">
    <property type="term" value="P:negative regulation of complement activation, classical pathway"/>
    <property type="evidence" value="ECO:0000318"/>
    <property type="project" value="GO_Central"/>
</dbReference>
<dbReference type="GO" id="GO:0002456">
    <property type="term" value="P:T cell mediated immunity"/>
    <property type="evidence" value="ECO:0000318"/>
    <property type="project" value="GO_Central"/>
</dbReference>
<dbReference type="CDD" id="cd00033">
    <property type="entry name" value="CCP"/>
    <property type="match status" value="7"/>
</dbReference>
<dbReference type="FunFam" id="2.10.70.10:FF:000055">
    <property type="entry name" value="Complement decay-accelerating factor, GPI-anchored"/>
    <property type="match status" value="1"/>
</dbReference>
<dbReference type="FunFam" id="2.10.70.10:FF:000014">
    <property type="entry name" value="Membrane cofactor protein"/>
    <property type="match status" value="2"/>
</dbReference>
<dbReference type="FunFam" id="2.10.70.10:FF:000095">
    <property type="entry name" value="Zona pellucida sperm-binding protein 3 receptor"/>
    <property type="match status" value="1"/>
</dbReference>
<dbReference type="FunFam" id="2.10.70.10:FF:000115">
    <property type="entry name" value="Zona pellucida sperm-binding protein 3 receptor"/>
    <property type="match status" value="1"/>
</dbReference>
<dbReference type="FunFam" id="2.20.28.230:FF:000006">
    <property type="entry name" value="Zona pellucida sperm-binding protein 3 receptor"/>
    <property type="match status" value="1"/>
</dbReference>
<dbReference type="Gene3D" id="1.20.5.3730">
    <property type="match status" value="1"/>
</dbReference>
<dbReference type="Gene3D" id="2.20.28.230">
    <property type="match status" value="1"/>
</dbReference>
<dbReference type="Gene3D" id="2.10.70.10">
    <property type="entry name" value="Complement Module, domain 1"/>
    <property type="match status" value="6"/>
</dbReference>
<dbReference type="InterPro" id="IPR040514">
    <property type="entry name" value="C4bp_oligo"/>
</dbReference>
<dbReference type="InterPro" id="IPR050350">
    <property type="entry name" value="Compl-Cell_Adhes-Reg"/>
</dbReference>
<dbReference type="InterPro" id="IPR035976">
    <property type="entry name" value="Sushi/SCR/CCP_sf"/>
</dbReference>
<dbReference type="InterPro" id="IPR000436">
    <property type="entry name" value="Sushi_SCR_CCP_dom"/>
</dbReference>
<dbReference type="PANTHER" id="PTHR19325">
    <property type="entry name" value="COMPLEMENT COMPONENT-RELATED SUSHI DOMAIN-CONTAINING"/>
    <property type="match status" value="1"/>
</dbReference>
<dbReference type="PANTHER" id="PTHR19325:SF560">
    <property type="entry name" value="SUSHI, VON WILLEBRAND FACTOR TYPE A, EGF AND PENTRAXIN DOMAIN-CONTAINING PROTEIN 1"/>
    <property type="match status" value="1"/>
</dbReference>
<dbReference type="Pfam" id="PF18453">
    <property type="entry name" value="C4bp_oligo"/>
    <property type="match status" value="1"/>
</dbReference>
<dbReference type="Pfam" id="PF00084">
    <property type="entry name" value="Sushi"/>
    <property type="match status" value="7"/>
</dbReference>
<dbReference type="SMART" id="SM00032">
    <property type="entry name" value="CCP"/>
    <property type="match status" value="7"/>
</dbReference>
<dbReference type="SUPFAM" id="SSF57535">
    <property type="entry name" value="Complement control module/SCR domain"/>
    <property type="match status" value="7"/>
</dbReference>
<dbReference type="PROSITE" id="PS50923">
    <property type="entry name" value="SUSHI"/>
    <property type="match status" value="7"/>
</dbReference>
<name>ZP3R_RAT</name>